<evidence type="ECO:0000255" key="1">
    <source>
        <dbReference type="HAMAP-Rule" id="MF_00016"/>
    </source>
</evidence>
<sequence>MIEADRLISAGTTLPEDVADRAIRPKLLEEYVGQPQVRSQMEIFIKAAKLRGDALDHLLIFGPPGLGKTTLANIVANEMGVNLRTTSGPVLEKAGDLAAMLTNLEPHDVLFIDEIHRLSPVVEEVLYPAMEDYQLDIMIGEGPAARSIKIDLPPFTLIGATTRAGSLTSPLRDRFGIVQRLEFYQVPDLQYIVSRSARFMGLEMSDDGALEVARRARGTPRIANRLLRRVRDFAEVKHDGTISADIAAQALDMLNVDAEGFDYMDRKLLLAVIDKFFGGPVGLDNLAAAIGEERETIEDVLEPYLIQQGFLQRTPRGRMATVRAWNHFGITPPEMP</sequence>
<accession>B7NBL1</accession>
<feature type="chain" id="PRO_1000195220" description="Holliday junction branch migration complex subunit RuvB">
    <location>
        <begin position="1"/>
        <end position="336"/>
    </location>
</feature>
<feature type="region of interest" description="Large ATPase domain (RuvB-L)" evidence="1">
    <location>
        <begin position="4"/>
        <end position="184"/>
    </location>
</feature>
<feature type="region of interest" description="Small ATPAse domain (RuvB-S)" evidence="1">
    <location>
        <begin position="185"/>
        <end position="255"/>
    </location>
</feature>
<feature type="region of interest" description="Head domain (RuvB-H)" evidence="1">
    <location>
        <begin position="258"/>
        <end position="336"/>
    </location>
</feature>
<feature type="binding site" evidence="1">
    <location>
        <position position="23"/>
    </location>
    <ligand>
        <name>ATP</name>
        <dbReference type="ChEBI" id="CHEBI:30616"/>
    </ligand>
</feature>
<feature type="binding site" evidence="1">
    <location>
        <position position="24"/>
    </location>
    <ligand>
        <name>ATP</name>
        <dbReference type="ChEBI" id="CHEBI:30616"/>
    </ligand>
</feature>
<feature type="binding site" evidence="1">
    <location>
        <position position="65"/>
    </location>
    <ligand>
        <name>ATP</name>
        <dbReference type="ChEBI" id="CHEBI:30616"/>
    </ligand>
</feature>
<feature type="binding site" evidence="1">
    <location>
        <position position="68"/>
    </location>
    <ligand>
        <name>ATP</name>
        <dbReference type="ChEBI" id="CHEBI:30616"/>
    </ligand>
</feature>
<feature type="binding site" evidence="1">
    <location>
        <position position="69"/>
    </location>
    <ligand>
        <name>ATP</name>
        <dbReference type="ChEBI" id="CHEBI:30616"/>
    </ligand>
</feature>
<feature type="binding site" evidence="1">
    <location>
        <position position="69"/>
    </location>
    <ligand>
        <name>Mg(2+)</name>
        <dbReference type="ChEBI" id="CHEBI:18420"/>
    </ligand>
</feature>
<feature type="binding site" evidence="1">
    <location>
        <position position="70"/>
    </location>
    <ligand>
        <name>ATP</name>
        <dbReference type="ChEBI" id="CHEBI:30616"/>
    </ligand>
</feature>
<feature type="binding site" evidence="1">
    <location>
        <begin position="131"/>
        <end position="133"/>
    </location>
    <ligand>
        <name>ATP</name>
        <dbReference type="ChEBI" id="CHEBI:30616"/>
    </ligand>
</feature>
<feature type="binding site" evidence="1">
    <location>
        <position position="174"/>
    </location>
    <ligand>
        <name>ATP</name>
        <dbReference type="ChEBI" id="CHEBI:30616"/>
    </ligand>
</feature>
<feature type="binding site" evidence="1">
    <location>
        <position position="184"/>
    </location>
    <ligand>
        <name>ATP</name>
        <dbReference type="ChEBI" id="CHEBI:30616"/>
    </ligand>
</feature>
<feature type="binding site" evidence="1">
    <location>
        <position position="221"/>
    </location>
    <ligand>
        <name>ATP</name>
        <dbReference type="ChEBI" id="CHEBI:30616"/>
    </ligand>
</feature>
<feature type="binding site" evidence="1">
    <location>
        <position position="294"/>
    </location>
    <ligand>
        <name>DNA</name>
        <dbReference type="ChEBI" id="CHEBI:16991"/>
    </ligand>
</feature>
<feature type="binding site" evidence="1">
    <location>
        <position position="313"/>
    </location>
    <ligand>
        <name>DNA</name>
        <dbReference type="ChEBI" id="CHEBI:16991"/>
    </ligand>
</feature>
<feature type="binding site" evidence="1">
    <location>
        <position position="318"/>
    </location>
    <ligand>
        <name>DNA</name>
        <dbReference type="ChEBI" id="CHEBI:16991"/>
    </ligand>
</feature>
<name>RUVB_ECOLU</name>
<protein>
    <recommendedName>
        <fullName evidence="1">Holliday junction branch migration complex subunit RuvB</fullName>
        <ecNumber evidence="1">3.6.4.-</ecNumber>
    </recommendedName>
</protein>
<dbReference type="EC" id="3.6.4.-" evidence="1"/>
<dbReference type="EMBL" id="CU928163">
    <property type="protein sequence ID" value="CAR13351.1"/>
    <property type="molecule type" value="Genomic_DNA"/>
</dbReference>
<dbReference type="RefSeq" id="WP_000568522.1">
    <property type="nucleotide sequence ID" value="NC_011751.1"/>
</dbReference>
<dbReference type="RefSeq" id="YP_002412880.1">
    <property type="nucleotide sequence ID" value="NC_011751.1"/>
</dbReference>
<dbReference type="SMR" id="B7NBL1"/>
<dbReference type="STRING" id="585056.ECUMN_2158"/>
<dbReference type="GeneID" id="86860002"/>
<dbReference type="KEGG" id="eum:ECUMN_2158"/>
<dbReference type="PATRIC" id="fig|585056.7.peg.2343"/>
<dbReference type="HOGENOM" id="CLU_055599_1_0_6"/>
<dbReference type="Proteomes" id="UP000007097">
    <property type="component" value="Chromosome"/>
</dbReference>
<dbReference type="GO" id="GO:0005737">
    <property type="term" value="C:cytoplasm"/>
    <property type="evidence" value="ECO:0007669"/>
    <property type="project" value="UniProtKB-SubCell"/>
</dbReference>
<dbReference type="GO" id="GO:0048476">
    <property type="term" value="C:Holliday junction resolvase complex"/>
    <property type="evidence" value="ECO:0007669"/>
    <property type="project" value="UniProtKB-UniRule"/>
</dbReference>
<dbReference type="GO" id="GO:0005524">
    <property type="term" value="F:ATP binding"/>
    <property type="evidence" value="ECO:0007669"/>
    <property type="project" value="UniProtKB-UniRule"/>
</dbReference>
<dbReference type="GO" id="GO:0016887">
    <property type="term" value="F:ATP hydrolysis activity"/>
    <property type="evidence" value="ECO:0007669"/>
    <property type="project" value="InterPro"/>
</dbReference>
<dbReference type="GO" id="GO:0000400">
    <property type="term" value="F:four-way junction DNA binding"/>
    <property type="evidence" value="ECO:0007669"/>
    <property type="project" value="UniProtKB-UniRule"/>
</dbReference>
<dbReference type="GO" id="GO:0009378">
    <property type="term" value="F:four-way junction helicase activity"/>
    <property type="evidence" value="ECO:0007669"/>
    <property type="project" value="InterPro"/>
</dbReference>
<dbReference type="GO" id="GO:0006310">
    <property type="term" value="P:DNA recombination"/>
    <property type="evidence" value="ECO:0007669"/>
    <property type="project" value="UniProtKB-UniRule"/>
</dbReference>
<dbReference type="GO" id="GO:0006281">
    <property type="term" value="P:DNA repair"/>
    <property type="evidence" value="ECO:0007669"/>
    <property type="project" value="UniProtKB-UniRule"/>
</dbReference>
<dbReference type="GO" id="GO:0009432">
    <property type="term" value="P:SOS response"/>
    <property type="evidence" value="ECO:0007669"/>
    <property type="project" value="UniProtKB-UniRule"/>
</dbReference>
<dbReference type="CDD" id="cd00009">
    <property type="entry name" value="AAA"/>
    <property type="match status" value="1"/>
</dbReference>
<dbReference type="FunFam" id="1.10.10.10:FF:000086">
    <property type="entry name" value="Holliday junction ATP-dependent DNA helicase RuvB"/>
    <property type="match status" value="1"/>
</dbReference>
<dbReference type="FunFam" id="1.10.8.60:FF:000023">
    <property type="entry name" value="Holliday junction ATP-dependent DNA helicase RuvB"/>
    <property type="match status" value="1"/>
</dbReference>
<dbReference type="FunFam" id="3.40.50.300:FF:000073">
    <property type="entry name" value="Holliday junction ATP-dependent DNA helicase RuvB"/>
    <property type="match status" value="1"/>
</dbReference>
<dbReference type="Gene3D" id="1.10.8.60">
    <property type="match status" value="1"/>
</dbReference>
<dbReference type="Gene3D" id="3.40.50.300">
    <property type="entry name" value="P-loop containing nucleotide triphosphate hydrolases"/>
    <property type="match status" value="1"/>
</dbReference>
<dbReference type="Gene3D" id="1.10.10.10">
    <property type="entry name" value="Winged helix-like DNA-binding domain superfamily/Winged helix DNA-binding domain"/>
    <property type="match status" value="1"/>
</dbReference>
<dbReference type="HAMAP" id="MF_00016">
    <property type="entry name" value="DNA_HJ_migration_RuvB"/>
    <property type="match status" value="1"/>
</dbReference>
<dbReference type="InterPro" id="IPR003593">
    <property type="entry name" value="AAA+_ATPase"/>
</dbReference>
<dbReference type="InterPro" id="IPR041445">
    <property type="entry name" value="AAA_lid_4"/>
</dbReference>
<dbReference type="InterPro" id="IPR004605">
    <property type="entry name" value="DNA_helicase_Holl-junc_RuvB"/>
</dbReference>
<dbReference type="InterPro" id="IPR027417">
    <property type="entry name" value="P-loop_NTPase"/>
</dbReference>
<dbReference type="InterPro" id="IPR008824">
    <property type="entry name" value="RuvB-like_N"/>
</dbReference>
<dbReference type="InterPro" id="IPR008823">
    <property type="entry name" value="RuvB_C"/>
</dbReference>
<dbReference type="InterPro" id="IPR036388">
    <property type="entry name" value="WH-like_DNA-bd_sf"/>
</dbReference>
<dbReference type="InterPro" id="IPR036390">
    <property type="entry name" value="WH_DNA-bd_sf"/>
</dbReference>
<dbReference type="NCBIfam" id="NF000868">
    <property type="entry name" value="PRK00080.1"/>
    <property type="match status" value="1"/>
</dbReference>
<dbReference type="NCBIfam" id="TIGR00635">
    <property type="entry name" value="ruvB"/>
    <property type="match status" value="1"/>
</dbReference>
<dbReference type="PANTHER" id="PTHR42848">
    <property type="match status" value="1"/>
</dbReference>
<dbReference type="PANTHER" id="PTHR42848:SF1">
    <property type="entry name" value="HOLLIDAY JUNCTION BRANCH MIGRATION COMPLEX SUBUNIT RUVB"/>
    <property type="match status" value="1"/>
</dbReference>
<dbReference type="Pfam" id="PF17864">
    <property type="entry name" value="AAA_lid_4"/>
    <property type="match status" value="1"/>
</dbReference>
<dbReference type="Pfam" id="PF05491">
    <property type="entry name" value="RuvB_C"/>
    <property type="match status" value="1"/>
</dbReference>
<dbReference type="Pfam" id="PF05496">
    <property type="entry name" value="RuvB_N"/>
    <property type="match status" value="1"/>
</dbReference>
<dbReference type="SMART" id="SM00382">
    <property type="entry name" value="AAA"/>
    <property type="match status" value="1"/>
</dbReference>
<dbReference type="SUPFAM" id="SSF52540">
    <property type="entry name" value="P-loop containing nucleoside triphosphate hydrolases"/>
    <property type="match status" value="1"/>
</dbReference>
<dbReference type="SUPFAM" id="SSF46785">
    <property type="entry name" value="Winged helix' DNA-binding domain"/>
    <property type="match status" value="1"/>
</dbReference>
<comment type="function">
    <text evidence="1">The RuvA-RuvB-RuvC complex processes Holliday junction (HJ) DNA during genetic recombination and DNA repair, while the RuvA-RuvB complex plays an important role in the rescue of blocked DNA replication forks via replication fork reversal (RFR). RuvA specifically binds to HJ cruciform DNA, conferring on it an open structure. The RuvB hexamer acts as an ATP-dependent pump, pulling dsDNA into and through the RuvAB complex. RuvB forms 2 homohexamers on either side of HJ DNA bound by 1 or 2 RuvA tetramers; 4 subunits per hexamer contact DNA at a time. Coordinated motions by a converter formed by DNA-disengaged RuvB subunits stimulates ATP hydrolysis and nucleotide exchange. Immobilization of the converter enables RuvB to convert the ATP-contained energy into a lever motion, pulling 2 nucleotides of DNA out of the RuvA tetramer per ATP hydrolyzed, thus driving DNA branch migration. The RuvB motors rotate together with the DNA substrate, which together with the progressing nucleotide cycle form the mechanistic basis for DNA recombination by continuous HJ branch migration. Branch migration allows RuvC to scan DNA until it finds its consensus sequence, where it cleaves and resolves cruciform DNA.</text>
</comment>
<comment type="catalytic activity">
    <reaction evidence="1">
        <text>ATP + H2O = ADP + phosphate + H(+)</text>
        <dbReference type="Rhea" id="RHEA:13065"/>
        <dbReference type="ChEBI" id="CHEBI:15377"/>
        <dbReference type="ChEBI" id="CHEBI:15378"/>
        <dbReference type="ChEBI" id="CHEBI:30616"/>
        <dbReference type="ChEBI" id="CHEBI:43474"/>
        <dbReference type="ChEBI" id="CHEBI:456216"/>
    </reaction>
</comment>
<comment type="subunit">
    <text evidence="1">Homohexamer. Forms an RuvA(8)-RuvB(12)-Holliday junction (HJ) complex. HJ DNA is sandwiched between 2 RuvA tetramers; dsDNA enters through RuvA and exits via RuvB. An RuvB hexamer assembles on each DNA strand where it exits the tetramer. Each RuvB hexamer is contacted by two RuvA subunits (via domain III) on 2 adjacent RuvB subunits; this complex drives branch migration. In the full resolvosome a probable DNA-RuvA(4)-RuvB(12)-RuvC(2) complex forms which resolves the HJ.</text>
</comment>
<comment type="subcellular location">
    <subcellularLocation>
        <location evidence="1">Cytoplasm</location>
    </subcellularLocation>
</comment>
<comment type="domain">
    <text evidence="1">Has 3 domains, the large (RuvB-L) and small ATPase (RuvB-S) domains and the C-terminal head (RuvB-H) domain. The head domain binds DNA, while the ATPase domains jointly bind ATP, ADP or are empty depending on the state of the subunit in the translocation cycle. During a single DNA translocation step the structure of each domain remains the same, but their relative positions change.</text>
</comment>
<comment type="similarity">
    <text evidence="1">Belongs to the RuvB family.</text>
</comment>
<reference key="1">
    <citation type="journal article" date="2009" name="PLoS Genet.">
        <title>Organised genome dynamics in the Escherichia coli species results in highly diverse adaptive paths.</title>
        <authorList>
            <person name="Touchon M."/>
            <person name="Hoede C."/>
            <person name="Tenaillon O."/>
            <person name="Barbe V."/>
            <person name="Baeriswyl S."/>
            <person name="Bidet P."/>
            <person name="Bingen E."/>
            <person name="Bonacorsi S."/>
            <person name="Bouchier C."/>
            <person name="Bouvet O."/>
            <person name="Calteau A."/>
            <person name="Chiapello H."/>
            <person name="Clermont O."/>
            <person name="Cruveiller S."/>
            <person name="Danchin A."/>
            <person name="Diard M."/>
            <person name="Dossat C."/>
            <person name="Karoui M.E."/>
            <person name="Frapy E."/>
            <person name="Garry L."/>
            <person name="Ghigo J.M."/>
            <person name="Gilles A.M."/>
            <person name="Johnson J."/>
            <person name="Le Bouguenec C."/>
            <person name="Lescat M."/>
            <person name="Mangenot S."/>
            <person name="Martinez-Jehanne V."/>
            <person name="Matic I."/>
            <person name="Nassif X."/>
            <person name="Oztas S."/>
            <person name="Petit M.A."/>
            <person name="Pichon C."/>
            <person name="Rouy Z."/>
            <person name="Ruf C.S."/>
            <person name="Schneider D."/>
            <person name="Tourret J."/>
            <person name="Vacherie B."/>
            <person name="Vallenet D."/>
            <person name="Medigue C."/>
            <person name="Rocha E.P.C."/>
            <person name="Denamur E."/>
        </authorList>
    </citation>
    <scope>NUCLEOTIDE SEQUENCE [LARGE SCALE GENOMIC DNA]</scope>
    <source>
        <strain>UMN026 / ExPEC</strain>
    </source>
</reference>
<proteinExistence type="inferred from homology"/>
<gene>
    <name evidence="1" type="primary">ruvB</name>
    <name type="ordered locus">ECUMN_2158</name>
</gene>
<keyword id="KW-0067">ATP-binding</keyword>
<keyword id="KW-0963">Cytoplasm</keyword>
<keyword id="KW-0227">DNA damage</keyword>
<keyword id="KW-0233">DNA recombination</keyword>
<keyword id="KW-0234">DNA repair</keyword>
<keyword id="KW-0238">DNA-binding</keyword>
<keyword id="KW-0378">Hydrolase</keyword>
<keyword id="KW-0547">Nucleotide-binding</keyword>
<keyword id="KW-0742">SOS response</keyword>
<organism>
    <name type="scientific">Escherichia coli O17:K52:H18 (strain UMN026 / ExPEC)</name>
    <dbReference type="NCBI Taxonomy" id="585056"/>
    <lineage>
        <taxon>Bacteria</taxon>
        <taxon>Pseudomonadati</taxon>
        <taxon>Pseudomonadota</taxon>
        <taxon>Gammaproteobacteria</taxon>
        <taxon>Enterobacterales</taxon>
        <taxon>Enterobacteriaceae</taxon>
        <taxon>Escherichia</taxon>
    </lineage>
</organism>